<feature type="chain" id="PRO_1000126089" description="Glycogen synthase">
    <location>
        <begin position="1"/>
        <end position="489"/>
    </location>
</feature>
<feature type="binding site" evidence="1">
    <location>
        <position position="20"/>
    </location>
    <ligand>
        <name>ADP-alpha-D-glucose</name>
        <dbReference type="ChEBI" id="CHEBI:57498"/>
    </ligand>
</feature>
<reference key="1">
    <citation type="submission" date="2008-06" db="EMBL/GenBank/DDBJ databases">
        <title>Complete sequence of Pelodictyon phaeoclathratiforme BU-1.</title>
        <authorList>
            <consortium name="US DOE Joint Genome Institute"/>
            <person name="Lucas S."/>
            <person name="Copeland A."/>
            <person name="Lapidus A."/>
            <person name="Glavina del Rio T."/>
            <person name="Dalin E."/>
            <person name="Tice H."/>
            <person name="Bruce D."/>
            <person name="Goodwin L."/>
            <person name="Pitluck S."/>
            <person name="Schmutz J."/>
            <person name="Larimer F."/>
            <person name="Land M."/>
            <person name="Hauser L."/>
            <person name="Kyrpides N."/>
            <person name="Mikhailova N."/>
            <person name="Liu Z."/>
            <person name="Li T."/>
            <person name="Zhao F."/>
            <person name="Overmann J."/>
            <person name="Bryant D.A."/>
            <person name="Richardson P."/>
        </authorList>
    </citation>
    <scope>NUCLEOTIDE SEQUENCE [LARGE SCALE GENOMIC DNA]</scope>
    <source>
        <strain>DSM 5477 / BU-1</strain>
    </source>
</reference>
<protein>
    <recommendedName>
        <fullName evidence="1">Glycogen synthase</fullName>
        <ecNumber evidence="1">2.4.1.21</ecNumber>
    </recommendedName>
    <alternativeName>
        <fullName evidence="1">Starch [bacterial glycogen] synthase</fullName>
    </alternativeName>
</protein>
<keyword id="KW-0320">Glycogen biosynthesis</keyword>
<keyword id="KW-0328">Glycosyltransferase</keyword>
<keyword id="KW-1185">Reference proteome</keyword>
<keyword id="KW-0808">Transferase</keyword>
<gene>
    <name evidence="1" type="primary">glgA</name>
    <name type="ordered locus">Ppha_0330</name>
</gene>
<organism>
    <name type="scientific">Pelodictyon phaeoclathratiforme (strain DSM 5477 / BU-1)</name>
    <dbReference type="NCBI Taxonomy" id="324925"/>
    <lineage>
        <taxon>Bacteria</taxon>
        <taxon>Pseudomonadati</taxon>
        <taxon>Chlorobiota</taxon>
        <taxon>Chlorobiia</taxon>
        <taxon>Chlorobiales</taxon>
        <taxon>Chlorobiaceae</taxon>
        <taxon>Chlorobium/Pelodictyon group</taxon>
        <taxon>Pelodictyon</taxon>
    </lineage>
</organism>
<comment type="function">
    <text evidence="1">Synthesizes alpha-1,4-glucan chains using ADP-glucose.</text>
</comment>
<comment type="catalytic activity">
    <reaction evidence="1">
        <text>[(1-&gt;4)-alpha-D-glucosyl](n) + ADP-alpha-D-glucose = [(1-&gt;4)-alpha-D-glucosyl](n+1) + ADP + H(+)</text>
        <dbReference type="Rhea" id="RHEA:18189"/>
        <dbReference type="Rhea" id="RHEA-COMP:9584"/>
        <dbReference type="Rhea" id="RHEA-COMP:9587"/>
        <dbReference type="ChEBI" id="CHEBI:15378"/>
        <dbReference type="ChEBI" id="CHEBI:15444"/>
        <dbReference type="ChEBI" id="CHEBI:57498"/>
        <dbReference type="ChEBI" id="CHEBI:456216"/>
        <dbReference type="EC" id="2.4.1.21"/>
    </reaction>
</comment>
<comment type="pathway">
    <text evidence="1">Glycan biosynthesis; glycogen biosynthesis.</text>
</comment>
<comment type="similarity">
    <text evidence="1">Belongs to the glycosyltransferase 1 family. Bacterial/plant glycogen synthase subfamily.</text>
</comment>
<proteinExistence type="inferred from homology"/>
<name>GLGA_PELPB</name>
<dbReference type="EC" id="2.4.1.21" evidence="1"/>
<dbReference type="EMBL" id="CP001110">
    <property type="protein sequence ID" value="ACF42663.1"/>
    <property type="molecule type" value="Genomic_DNA"/>
</dbReference>
<dbReference type="RefSeq" id="WP_012507158.1">
    <property type="nucleotide sequence ID" value="NC_011060.1"/>
</dbReference>
<dbReference type="SMR" id="B4SC83"/>
<dbReference type="STRING" id="324925.Ppha_0330"/>
<dbReference type="CAZy" id="GT5">
    <property type="family name" value="Glycosyltransferase Family 5"/>
</dbReference>
<dbReference type="KEGG" id="pph:Ppha_0330"/>
<dbReference type="eggNOG" id="COG0297">
    <property type="taxonomic scope" value="Bacteria"/>
</dbReference>
<dbReference type="HOGENOM" id="CLU_009583_18_0_10"/>
<dbReference type="OrthoDB" id="9808590at2"/>
<dbReference type="UniPathway" id="UPA00164"/>
<dbReference type="Proteomes" id="UP000002724">
    <property type="component" value="Chromosome"/>
</dbReference>
<dbReference type="GO" id="GO:0009011">
    <property type="term" value="F:alpha-1,4-glucan glucosyltransferase (ADP-glucose donor) activity"/>
    <property type="evidence" value="ECO:0007669"/>
    <property type="project" value="UniProtKB-UniRule"/>
</dbReference>
<dbReference type="GO" id="GO:0004373">
    <property type="term" value="F:alpha-1,4-glucan glucosyltransferase (UDP-glucose donor) activity"/>
    <property type="evidence" value="ECO:0007669"/>
    <property type="project" value="InterPro"/>
</dbReference>
<dbReference type="GO" id="GO:0005978">
    <property type="term" value="P:glycogen biosynthetic process"/>
    <property type="evidence" value="ECO:0007669"/>
    <property type="project" value="UniProtKB-UniRule"/>
</dbReference>
<dbReference type="CDD" id="cd03791">
    <property type="entry name" value="GT5_Glycogen_synthase_DULL1-like"/>
    <property type="match status" value="1"/>
</dbReference>
<dbReference type="Gene3D" id="3.40.50.2000">
    <property type="entry name" value="Glycogen Phosphorylase B"/>
    <property type="match status" value="2"/>
</dbReference>
<dbReference type="HAMAP" id="MF_00484">
    <property type="entry name" value="Glycogen_synth"/>
    <property type="match status" value="1"/>
</dbReference>
<dbReference type="InterPro" id="IPR001296">
    <property type="entry name" value="Glyco_trans_1"/>
</dbReference>
<dbReference type="InterPro" id="IPR011835">
    <property type="entry name" value="GS/SS"/>
</dbReference>
<dbReference type="InterPro" id="IPR013534">
    <property type="entry name" value="Starch_synth_cat_dom"/>
</dbReference>
<dbReference type="NCBIfam" id="TIGR02095">
    <property type="entry name" value="glgA"/>
    <property type="match status" value="1"/>
</dbReference>
<dbReference type="NCBIfam" id="NF010698">
    <property type="entry name" value="PRK14098.1"/>
    <property type="match status" value="1"/>
</dbReference>
<dbReference type="PANTHER" id="PTHR45825:SF11">
    <property type="entry name" value="ALPHA AMYLASE DOMAIN-CONTAINING PROTEIN"/>
    <property type="match status" value="1"/>
</dbReference>
<dbReference type="PANTHER" id="PTHR45825">
    <property type="entry name" value="GRANULE-BOUND STARCH SYNTHASE 1, CHLOROPLASTIC/AMYLOPLASTIC"/>
    <property type="match status" value="1"/>
</dbReference>
<dbReference type="Pfam" id="PF08323">
    <property type="entry name" value="Glyco_transf_5"/>
    <property type="match status" value="1"/>
</dbReference>
<dbReference type="Pfam" id="PF00534">
    <property type="entry name" value="Glycos_transf_1"/>
    <property type="match status" value="1"/>
</dbReference>
<dbReference type="SUPFAM" id="SSF53756">
    <property type="entry name" value="UDP-Glycosyltransferase/glycogen phosphorylase"/>
    <property type="match status" value="1"/>
</dbReference>
<evidence type="ECO:0000255" key="1">
    <source>
        <dbReference type="HAMAP-Rule" id="MF_00484"/>
    </source>
</evidence>
<sequence length="489" mass="55604">MSRRNFKVLYVSGEVSPFVRISPLADFMASFPQAIEEEGFEARIMMPKYGTINDRKFRLHDVLRLSDIEVDLKEKVDLLNVKVTALPSSKIQTYFLYNEKYFKRNGLFTDIHNGSDLKGSTDKVVFFNVGVLETLQRLGWKPDIIHCHDWHAALIPLLLKTVYASHEFFRDIKTVFTIHNIYRQGILPMKAFQKLLPEEVSSALHCSNDEVNMLYTGVEHADLLTTTSKVYAEEIVHDGLQTYGLGRVLEEHQAKFYGILNGIDSRQWNSAADKLIKKRYSLEHMDGKLDNKKALLEEAGLPYTEGTPVVGVILNFDEFQGAELLQQSLEQLAALDIQLIISGSGDKKYEKVFQDFALEHPEQVSVHGEYSDSFFHLAIAGLDILLMPGMIESCGMIQMFAMNYGTIPVAYAGGGIVETIEERDEESGSGFIFHDYSAESLVGKLEEALACFHDEESWQQIVMTAMTRDFTWKKSAEEYDQLYRELLEP</sequence>
<accession>B4SC83</accession>